<sequence length="131" mass="14193">MDTSHTTKSCVLILLVALLCAERAQGLQCYECYGVPIETSCPAVTCRASDGFCIAQNIELIEDSQRRKLKTRQCLSFCPAGVPIRDPNIRERTSCCSEDLCNAAVPTAGSTWTMAGVLLFSLSSVVLQTLL</sequence>
<comment type="subcellular location">
    <subcellularLocation>
        <location evidence="3">Cell membrane</location>
        <topology evidence="3">Lipid-anchor</topology>
        <topology evidence="3">GPI-anchor</topology>
    </subcellularLocation>
</comment>
<dbReference type="EMBL" id="M21734">
    <property type="protein sequence ID" value="AAA39469.1"/>
    <property type="molecule type" value="Genomic_DNA"/>
</dbReference>
<dbReference type="EMBL" id="M21771">
    <property type="protein sequence ID" value="AAA39469.1"/>
    <property type="status" value="JOINED"/>
    <property type="molecule type" value="Genomic_DNA"/>
</dbReference>
<dbReference type="EMBL" id="M21733">
    <property type="protein sequence ID" value="AAA39469.1"/>
    <property type="status" value="JOINED"/>
    <property type="molecule type" value="Genomic_DNA"/>
</dbReference>
<dbReference type="EMBL" id="AK088782">
    <property type="protein sequence ID" value="BAC40570.1"/>
    <property type="molecule type" value="mRNA"/>
</dbReference>
<dbReference type="EMBL" id="AK143577">
    <property type="protein sequence ID" value="BAE25446.1"/>
    <property type="molecule type" value="mRNA"/>
</dbReference>
<dbReference type="EMBL" id="BC010764">
    <property type="protein sequence ID" value="AAH10764.1"/>
    <property type="molecule type" value="mRNA"/>
</dbReference>
<dbReference type="CCDS" id="CCDS27541.1"/>
<dbReference type="RefSeq" id="NP_001238984.1">
    <property type="nucleotide sequence ID" value="NM_001252055.2"/>
</dbReference>
<dbReference type="RefSeq" id="NP_001398284.1">
    <property type="nucleotide sequence ID" value="NM_001411355.1"/>
</dbReference>
<dbReference type="RefSeq" id="NP_034871.2">
    <property type="nucleotide sequence ID" value="NM_010741.4"/>
</dbReference>
<dbReference type="RefSeq" id="XP_006520584.1">
    <property type="nucleotide sequence ID" value="XM_006520521.3"/>
</dbReference>
<dbReference type="BioGRID" id="201240">
    <property type="interactions" value="1"/>
</dbReference>
<dbReference type="FunCoup" id="P0CW02">
    <property type="interactions" value="21"/>
</dbReference>
<dbReference type="SwissPalm" id="P0CW02"/>
<dbReference type="jPOST" id="P0CW02"/>
<dbReference type="PaxDb" id="10090-ENSMUSP00000066954"/>
<dbReference type="PeptideAtlas" id="P0CW02"/>
<dbReference type="ProteomicsDB" id="291971"/>
<dbReference type="Pumba" id="P0CW02"/>
<dbReference type="DNASU" id="17067"/>
<dbReference type="Ensembl" id="ENSMUST00000065408.16">
    <property type="protein sequence ID" value="ENSMUSP00000066954.10"/>
    <property type="gene ID" value="ENSMUSG00000079018.11"/>
</dbReference>
<dbReference type="Ensembl" id="ENSMUST00000179762.8">
    <property type="protein sequence ID" value="ENSMUSP00000137401.2"/>
    <property type="gene ID" value="ENSMUSG00000079018.11"/>
</dbReference>
<dbReference type="Ensembl" id="ENSMUST00000187347.7">
    <property type="protein sequence ID" value="ENSMUSP00000139799.2"/>
    <property type="gene ID" value="ENSMUSG00000079018.11"/>
</dbReference>
<dbReference type="GeneID" id="17067"/>
<dbReference type="KEGG" id="mmu:17067"/>
<dbReference type="UCSC" id="uc007wgn.2">
    <property type="organism name" value="mouse"/>
</dbReference>
<dbReference type="AGR" id="MGI:96882"/>
<dbReference type="CTD" id="17067"/>
<dbReference type="MGI" id="MGI:96882">
    <property type="gene designation" value="Ly6c1"/>
</dbReference>
<dbReference type="VEuPathDB" id="HostDB:ENSMUSG00000079018"/>
<dbReference type="eggNOG" id="ENOG502TD4F">
    <property type="taxonomic scope" value="Eukaryota"/>
</dbReference>
<dbReference type="GeneTree" id="ENSGT00940000154560"/>
<dbReference type="HOGENOM" id="CLU_106772_0_0_1"/>
<dbReference type="InParanoid" id="P0CW02"/>
<dbReference type="OrthoDB" id="9624109at2759"/>
<dbReference type="PhylomeDB" id="P0CW02"/>
<dbReference type="TreeFam" id="TF337757"/>
<dbReference type="BioGRID-ORCS" id="17067">
    <property type="hits" value="3 hits in 45 CRISPR screens"/>
</dbReference>
<dbReference type="ChiTaRS" id="Ly6c1">
    <property type="organism name" value="mouse"/>
</dbReference>
<dbReference type="PRO" id="PR:P0CW02"/>
<dbReference type="Proteomes" id="UP000000589">
    <property type="component" value="Chromosome 15"/>
</dbReference>
<dbReference type="RNAct" id="P0CW02">
    <property type="molecule type" value="protein"/>
</dbReference>
<dbReference type="Bgee" id="ENSMUSG00000079018">
    <property type="expression patterns" value="Expressed in synovial joint and 69 other cell types or tissues"/>
</dbReference>
<dbReference type="ExpressionAtlas" id="P0CW02">
    <property type="expression patterns" value="baseline and differential"/>
</dbReference>
<dbReference type="GO" id="GO:0009986">
    <property type="term" value="C:cell surface"/>
    <property type="evidence" value="ECO:0000314"/>
    <property type="project" value="MGI"/>
</dbReference>
<dbReference type="GO" id="GO:0009897">
    <property type="term" value="C:external side of plasma membrane"/>
    <property type="evidence" value="ECO:0000314"/>
    <property type="project" value="MGI"/>
</dbReference>
<dbReference type="CDD" id="cd23541">
    <property type="entry name" value="TFP_LU_ECD_Ly6A_like"/>
    <property type="match status" value="1"/>
</dbReference>
<dbReference type="FunFam" id="2.10.60.10:FF:000003">
    <property type="entry name" value="lymphocyte antigen 6E isoform X1"/>
    <property type="match status" value="1"/>
</dbReference>
<dbReference type="Gene3D" id="2.10.60.10">
    <property type="entry name" value="CD59"/>
    <property type="match status" value="1"/>
</dbReference>
<dbReference type="InterPro" id="IPR018363">
    <property type="entry name" value="CD59_antigen_CS"/>
</dbReference>
<dbReference type="InterPro" id="IPR016054">
    <property type="entry name" value="LY6_UPA_recep-like"/>
</dbReference>
<dbReference type="InterPro" id="IPR051445">
    <property type="entry name" value="LY6H/LY6L_nAChR_modulators"/>
</dbReference>
<dbReference type="InterPro" id="IPR045860">
    <property type="entry name" value="Snake_toxin-like_sf"/>
</dbReference>
<dbReference type="PANTHER" id="PTHR32217">
    <property type="entry name" value="LYMPHOCYTE ANTIGEN 6H"/>
    <property type="match status" value="1"/>
</dbReference>
<dbReference type="PANTHER" id="PTHR32217:SF3">
    <property type="entry name" value="LYMPHOCYTE ANTIGEN 6S"/>
    <property type="match status" value="1"/>
</dbReference>
<dbReference type="Pfam" id="PF00021">
    <property type="entry name" value="UPAR_LY6"/>
    <property type="match status" value="1"/>
</dbReference>
<dbReference type="SMART" id="SM00134">
    <property type="entry name" value="LU"/>
    <property type="match status" value="1"/>
</dbReference>
<dbReference type="SUPFAM" id="SSF57302">
    <property type="entry name" value="Snake toxin-like"/>
    <property type="match status" value="1"/>
</dbReference>
<dbReference type="PROSITE" id="PS00983">
    <property type="entry name" value="LY6_UPAR"/>
    <property type="match status" value="1"/>
</dbReference>
<organism>
    <name type="scientific">Mus musculus</name>
    <name type="common">Mouse</name>
    <dbReference type="NCBI Taxonomy" id="10090"/>
    <lineage>
        <taxon>Eukaryota</taxon>
        <taxon>Metazoa</taxon>
        <taxon>Chordata</taxon>
        <taxon>Craniata</taxon>
        <taxon>Vertebrata</taxon>
        <taxon>Euteleostomi</taxon>
        <taxon>Mammalia</taxon>
        <taxon>Eutheria</taxon>
        <taxon>Euarchontoglires</taxon>
        <taxon>Glires</taxon>
        <taxon>Rodentia</taxon>
        <taxon>Myomorpha</taxon>
        <taxon>Muroidea</taxon>
        <taxon>Muridae</taxon>
        <taxon>Murinae</taxon>
        <taxon>Mus</taxon>
        <taxon>Mus</taxon>
    </lineage>
</organism>
<reference key="1">
    <citation type="journal article" date="1988" name="J. Immunol.">
        <title>Isolation and expression of an IFN-responsive Ly-6C chromosomal gene.</title>
        <authorList>
            <person name="Bothwell A.L.M."/>
            <person name="Pace P.E."/>
            <person name="Leclair K.P."/>
        </authorList>
    </citation>
    <scope>NUCLEOTIDE SEQUENCE [GENOMIC DNA]</scope>
</reference>
<reference key="2">
    <citation type="journal article" date="2005" name="Science">
        <title>The transcriptional landscape of the mammalian genome.</title>
        <authorList>
            <person name="Carninci P."/>
            <person name="Kasukawa T."/>
            <person name="Katayama S."/>
            <person name="Gough J."/>
            <person name="Frith M.C."/>
            <person name="Maeda N."/>
            <person name="Oyama R."/>
            <person name="Ravasi T."/>
            <person name="Lenhard B."/>
            <person name="Wells C."/>
            <person name="Kodzius R."/>
            <person name="Shimokawa K."/>
            <person name="Bajic V.B."/>
            <person name="Brenner S.E."/>
            <person name="Batalov S."/>
            <person name="Forrest A.R."/>
            <person name="Zavolan M."/>
            <person name="Davis M.J."/>
            <person name="Wilming L.G."/>
            <person name="Aidinis V."/>
            <person name="Allen J.E."/>
            <person name="Ambesi-Impiombato A."/>
            <person name="Apweiler R."/>
            <person name="Aturaliya R.N."/>
            <person name="Bailey T.L."/>
            <person name="Bansal M."/>
            <person name="Baxter L."/>
            <person name="Beisel K.W."/>
            <person name="Bersano T."/>
            <person name="Bono H."/>
            <person name="Chalk A.M."/>
            <person name="Chiu K.P."/>
            <person name="Choudhary V."/>
            <person name="Christoffels A."/>
            <person name="Clutterbuck D.R."/>
            <person name="Crowe M.L."/>
            <person name="Dalla E."/>
            <person name="Dalrymple B.P."/>
            <person name="de Bono B."/>
            <person name="Della Gatta G."/>
            <person name="di Bernardo D."/>
            <person name="Down T."/>
            <person name="Engstrom P."/>
            <person name="Fagiolini M."/>
            <person name="Faulkner G."/>
            <person name="Fletcher C.F."/>
            <person name="Fukushima T."/>
            <person name="Furuno M."/>
            <person name="Futaki S."/>
            <person name="Gariboldi M."/>
            <person name="Georgii-Hemming P."/>
            <person name="Gingeras T.R."/>
            <person name="Gojobori T."/>
            <person name="Green R.E."/>
            <person name="Gustincich S."/>
            <person name="Harbers M."/>
            <person name="Hayashi Y."/>
            <person name="Hensch T.K."/>
            <person name="Hirokawa N."/>
            <person name="Hill D."/>
            <person name="Huminiecki L."/>
            <person name="Iacono M."/>
            <person name="Ikeo K."/>
            <person name="Iwama A."/>
            <person name="Ishikawa T."/>
            <person name="Jakt M."/>
            <person name="Kanapin A."/>
            <person name="Katoh M."/>
            <person name="Kawasawa Y."/>
            <person name="Kelso J."/>
            <person name="Kitamura H."/>
            <person name="Kitano H."/>
            <person name="Kollias G."/>
            <person name="Krishnan S.P."/>
            <person name="Kruger A."/>
            <person name="Kummerfeld S.K."/>
            <person name="Kurochkin I.V."/>
            <person name="Lareau L.F."/>
            <person name="Lazarevic D."/>
            <person name="Lipovich L."/>
            <person name="Liu J."/>
            <person name="Liuni S."/>
            <person name="McWilliam S."/>
            <person name="Madan Babu M."/>
            <person name="Madera M."/>
            <person name="Marchionni L."/>
            <person name="Matsuda H."/>
            <person name="Matsuzawa S."/>
            <person name="Miki H."/>
            <person name="Mignone F."/>
            <person name="Miyake S."/>
            <person name="Morris K."/>
            <person name="Mottagui-Tabar S."/>
            <person name="Mulder N."/>
            <person name="Nakano N."/>
            <person name="Nakauchi H."/>
            <person name="Ng P."/>
            <person name="Nilsson R."/>
            <person name="Nishiguchi S."/>
            <person name="Nishikawa S."/>
            <person name="Nori F."/>
            <person name="Ohara O."/>
            <person name="Okazaki Y."/>
            <person name="Orlando V."/>
            <person name="Pang K.C."/>
            <person name="Pavan W.J."/>
            <person name="Pavesi G."/>
            <person name="Pesole G."/>
            <person name="Petrovsky N."/>
            <person name="Piazza S."/>
            <person name="Reed J."/>
            <person name="Reid J.F."/>
            <person name="Ring B.Z."/>
            <person name="Ringwald M."/>
            <person name="Rost B."/>
            <person name="Ruan Y."/>
            <person name="Salzberg S.L."/>
            <person name="Sandelin A."/>
            <person name="Schneider C."/>
            <person name="Schoenbach C."/>
            <person name="Sekiguchi K."/>
            <person name="Semple C.A."/>
            <person name="Seno S."/>
            <person name="Sessa L."/>
            <person name="Sheng Y."/>
            <person name="Shibata Y."/>
            <person name="Shimada H."/>
            <person name="Shimada K."/>
            <person name="Silva D."/>
            <person name="Sinclair B."/>
            <person name="Sperling S."/>
            <person name="Stupka E."/>
            <person name="Sugiura K."/>
            <person name="Sultana R."/>
            <person name="Takenaka Y."/>
            <person name="Taki K."/>
            <person name="Tammoja K."/>
            <person name="Tan S.L."/>
            <person name="Tang S."/>
            <person name="Taylor M.S."/>
            <person name="Tegner J."/>
            <person name="Teichmann S.A."/>
            <person name="Ueda H.R."/>
            <person name="van Nimwegen E."/>
            <person name="Verardo R."/>
            <person name="Wei C.L."/>
            <person name="Yagi K."/>
            <person name="Yamanishi H."/>
            <person name="Zabarovsky E."/>
            <person name="Zhu S."/>
            <person name="Zimmer A."/>
            <person name="Hide W."/>
            <person name="Bult C."/>
            <person name="Grimmond S.M."/>
            <person name="Teasdale R.D."/>
            <person name="Liu E.T."/>
            <person name="Brusic V."/>
            <person name="Quackenbush J."/>
            <person name="Wahlestedt C."/>
            <person name="Mattick J.S."/>
            <person name="Hume D.A."/>
            <person name="Kai C."/>
            <person name="Sasaki D."/>
            <person name="Tomaru Y."/>
            <person name="Fukuda S."/>
            <person name="Kanamori-Katayama M."/>
            <person name="Suzuki M."/>
            <person name="Aoki J."/>
            <person name="Arakawa T."/>
            <person name="Iida J."/>
            <person name="Imamura K."/>
            <person name="Itoh M."/>
            <person name="Kato T."/>
            <person name="Kawaji H."/>
            <person name="Kawagashira N."/>
            <person name="Kawashima T."/>
            <person name="Kojima M."/>
            <person name="Kondo S."/>
            <person name="Konno H."/>
            <person name="Nakano K."/>
            <person name="Ninomiya N."/>
            <person name="Nishio T."/>
            <person name="Okada M."/>
            <person name="Plessy C."/>
            <person name="Shibata K."/>
            <person name="Shiraki T."/>
            <person name="Suzuki S."/>
            <person name="Tagami M."/>
            <person name="Waki K."/>
            <person name="Watahiki A."/>
            <person name="Okamura-Oho Y."/>
            <person name="Suzuki H."/>
            <person name="Kawai J."/>
            <person name="Hayashizaki Y."/>
        </authorList>
    </citation>
    <scope>NUCLEOTIDE SEQUENCE [LARGE SCALE MRNA]</scope>
    <source>
        <strain>C57BL/6J</strain>
        <strain>NOD</strain>
        <tissue>Spleen</tissue>
        <tissue>Thymus</tissue>
    </source>
</reference>
<reference key="3">
    <citation type="journal article" date="2004" name="Genome Res.">
        <title>The status, quality, and expansion of the NIH full-length cDNA project: the Mammalian Gene Collection (MGC).</title>
        <authorList>
            <consortium name="The MGC Project Team"/>
        </authorList>
    </citation>
    <scope>NUCLEOTIDE SEQUENCE [LARGE SCALE MRNA]</scope>
    <source>
        <strain>FVB/N</strain>
        <tissue>Kidney</tissue>
    </source>
</reference>
<accession>P0CW02</accession>
<accession>P09568</accession>
<accession>Q58E40</accession>
<accession>Q8C2D8</accession>
<accession>Q91XG0</accession>
<name>LY6C1_MOUSE</name>
<proteinExistence type="evidence at transcript level"/>
<gene>
    <name type="primary">Ly6c1</name>
</gene>
<protein>
    <recommendedName>
        <fullName>Lymphocyte antigen 6C1</fullName>
        <shortName>Ly-6C1</shortName>
    </recommendedName>
</protein>
<feature type="signal peptide" evidence="2">
    <location>
        <begin position="1"/>
        <end position="26"/>
    </location>
</feature>
<feature type="chain" id="PRO_0000408033" description="Lymphocyte antigen 6C1">
    <location>
        <begin position="27"/>
        <end position="109"/>
    </location>
</feature>
<feature type="propeptide" id="PRO_0000408034" description="Removed in mature form" evidence="2">
    <location>
        <begin position="110"/>
        <end position="131"/>
    </location>
</feature>
<feature type="domain" description="UPAR/Ly6">
    <location>
        <begin position="27"/>
        <end position="115"/>
    </location>
</feature>
<feature type="lipid moiety-binding region" description="GPI-anchor amidated glycine" evidence="2">
    <location>
        <position position="109"/>
    </location>
</feature>
<feature type="disulfide bond" evidence="1">
    <location>
        <begin position="29"/>
        <end position="53"/>
    </location>
</feature>
<feature type="disulfide bond" evidence="1">
    <location>
        <begin position="32"/>
        <end position="41"/>
    </location>
</feature>
<feature type="disulfide bond" evidence="1">
    <location>
        <begin position="46"/>
        <end position="74"/>
    </location>
</feature>
<feature type="disulfide bond" evidence="1">
    <location>
        <begin position="78"/>
        <end position="95"/>
    </location>
</feature>
<feature type="disulfide bond" evidence="1">
    <location>
        <begin position="96"/>
        <end position="101"/>
    </location>
</feature>
<feature type="sequence conflict" description="In Ref. 1; AAA39469." evidence="3" ref="1">
    <original>TS</original>
    <variation>ST</variation>
    <location>
        <begin position="3"/>
        <end position="4"/>
    </location>
</feature>
<feature type="sequence conflict" description="In Ref. 1; AAA39469." evidence="3" ref="1">
    <original>T</original>
    <variation>A</variation>
    <location>
        <position position="6"/>
    </location>
</feature>
<feature type="sequence conflict" description="In Ref. 1; AAA39469." evidence="3" ref="1">
    <original>V</original>
    <variation>L</variation>
    <location>
        <position position="11"/>
    </location>
</feature>
<feature type="sequence conflict" description="In Ref. 1; AAA39469 and 2; BAC40570." evidence="3" ref="1 2">
    <original>E</original>
    <variation>G</variation>
    <location>
        <position position="22"/>
    </location>
</feature>
<keyword id="KW-1003">Cell membrane</keyword>
<keyword id="KW-1015">Disulfide bond</keyword>
<keyword id="KW-0325">Glycoprotein</keyword>
<keyword id="KW-0336">GPI-anchor</keyword>
<keyword id="KW-0449">Lipoprotein</keyword>
<keyword id="KW-0472">Membrane</keyword>
<keyword id="KW-1185">Reference proteome</keyword>
<keyword id="KW-0732">Signal</keyword>
<evidence type="ECO:0000250" key="1"/>
<evidence type="ECO:0000255" key="2"/>
<evidence type="ECO:0000305" key="3"/>